<keyword id="KW-0067">ATP-binding</keyword>
<keyword id="KW-0460">Magnesium</keyword>
<keyword id="KW-0547">Nucleotide-binding</keyword>
<keyword id="KW-1185">Reference proteome</keyword>
<keyword id="KW-0808">Transferase</keyword>
<keyword id="KW-0819">tRNA processing</keyword>
<evidence type="ECO:0000255" key="1">
    <source>
        <dbReference type="HAMAP-Rule" id="MF_00185"/>
    </source>
</evidence>
<gene>
    <name evidence="1" type="primary">miaA</name>
    <name type="ordered locus">Sfri_3312</name>
</gene>
<feature type="chain" id="PRO_0000377313" description="tRNA dimethylallyltransferase">
    <location>
        <begin position="1"/>
        <end position="296"/>
    </location>
</feature>
<feature type="region of interest" description="Interaction with substrate tRNA" evidence="1">
    <location>
        <begin position="27"/>
        <end position="30"/>
    </location>
</feature>
<feature type="region of interest" description="Interaction with substrate tRNA" evidence="1">
    <location>
        <begin position="151"/>
        <end position="155"/>
    </location>
</feature>
<feature type="region of interest" description="Interaction with substrate tRNA" evidence="1">
    <location>
        <begin position="232"/>
        <end position="237"/>
    </location>
</feature>
<feature type="binding site" evidence="1">
    <location>
        <begin position="2"/>
        <end position="9"/>
    </location>
    <ligand>
        <name>ATP</name>
        <dbReference type="ChEBI" id="CHEBI:30616"/>
    </ligand>
</feature>
<feature type="binding site" evidence="1">
    <location>
        <begin position="4"/>
        <end position="9"/>
    </location>
    <ligand>
        <name>substrate</name>
    </ligand>
</feature>
<feature type="site" description="Interaction with substrate tRNA" evidence="1">
    <location>
        <position position="93"/>
    </location>
</feature>
<feature type="site" description="Interaction with substrate tRNA" evidence="1">
    <location>
        <position position="115"/>
    </location>
</feature>
<comment type="function">
    <text evidence="1">Catalyzes the transfer of a dimethylallyl group onto the adenine at position 37 in tRNAs that read codons beginning with uridine, leading to the formation of N6-(dimethylallyl)adenosine (i(6)A).</text>
</comment>
<comment type="catalytic activity">
    <reaction evidence="1">
        <text>adenosine(37) in tRNA + dimethylallyl diphosphate = N(6)-dimethylallyladenosine(37) in tRNA + diphosphate</text>
        <dbReference type="Rhea" id="RHEA:26482"/>
        <dbReference type="Rhea" id="RHEA-COMP:10162"/>
        <dbReference type="Rhea" id="RHEA-COMP:10375"/>
        <dbReference type="ChEBI" id="CHEBI:33019"/>
        <dbReference type="ChEBI" id="CHEBI:57623"/>
        <dbReference type="ChEBI" id="CHEBI:74411"/>
        <dbReference type="ChEBI" id="CHEBI:74415"/>
        <dbReference type="EC" id="2.5.1.75"/>
    </reaction>
</comment>
<comment type="cofactor">
    <cofactor evidence="1">
        <name>Mg(2+)</name>
        <dbReference type="ChEBI" id="CHEBI:18420"/>
    </cofactor>
</comment>
<comment type="subunit">
    <text evidence="1">Monomer.</text>
</comment>
<comment type="similarity">
    <text evidence="1">Belongs to the IPP transferase family.</text>
</comment>
<proteinExistence type="inferred from homology"/>
<sequence length="296" mass="33299">MGPTASGKTALAIDMATQYNCEIISVDSALIYRDMNIGSAKPSAEELEMAPHKLIDILDPSESYSAADFRRDALLAIEDIISRGKTPLLVGGTMMYFKALLEGLSPLPSADEAIRQQILAQAQTEGWEALHQELCNIDPVAGERIHPNDPQRLSRALEVYRISGKTMTELTQTKSAALPYDVVQFAIAPNDRKVLHELIAKRFNIMLEQGFIEEVARLKARDDLHLELPSMRCVGYRQCWQYLDNEFDHATMVEKATAATRQLAKRQLTWLRSWPDLQWLESGVEGNLVTLMRQSR</sequence>
<name>MIAA_SHEFN</name>
<organism>
    <name type="scientific">Shewanella frigidimarina (strain NCIMB 400)</name>
    <dbReference type="NCBI Taxonomy" id="318167"/>
    <lineage>
        <taxon>Bacteria</taxon>
        <taxon>Pseudomonadati</taxon>
        <taxon>Pseudomonadota</taxon>
        <taxon>Gammaproteobacteria</taxon>
        <taxon>Alteromonadales</taxon>
        <taxon>Shewanellaceae</taxon>
        <taxon>Shewanella</taxon>
    </lineage>
</organism>
<protein>
    <recommendedName>
        <fullName evidence="1">tRNA dimethylallyltransferase</fullName>
        <ecNumber evidence="1">2.5.1.75</ecNumber>
    </recommendedName>
    <alternativeName>
        <fullName evidence="1">Dimethylallyl diphosphate:tRNA dimethylallyltransferase</fullName>
        <shortName evidence="1">DMAPP:tRNA dimethylallyltransferase</shortName>
        <shortName evidence="1">DMATase</shortName>
    </alternativeName>
    <alternativeName>
        <fullName evidence="1">Isopentenyl-diphosphate:tRNA isopentenyltransferase</fullName>
        <shortName evidence="1">IPP transferase</shortName>
        <shortName evidence="1">IPPT</shortName>
        <shortName evidence="1">IPTase</shortName>
    </alternativeName>
</protein>
<accession>Q07XW6</accession>
<dbReference type="EC" id="2.5.1.75" evidence="1"/>
<dbReference type="EMBL" id="CP000447">
    <property type="protein sequence ID" value="ABI73148.1"/>
    <property type="molecule type" value="Genomic_DNA"/>
</dbReference>
<dbReference type="SMR" id="Q07XW6"/>
<dbReference type="STRING" id="318167.Sfri_3312"/>
<dbReference type="KEGG" id="sfr:Sfri_3312"/>
<dbReference type="eggNOG" id="COG0324">
    <property type="taxonomic scope" value="Bacteria"/>
</dbReference>
<dbReference type="HOGENOM" id="CLU_032616_0_0_6"/>
<dbReference type="Proteomes" id="UP000000684">
    <property type="component" value="Chromosome"/>
</dbReference>
<dbReference type="GO" id="GO:0005524">
    <property type="term" value="F:ATP binding"/>
    <property type="evidence" value="ECO:0007669"/>
    <property type="project" value="UniProtKB-UniRule"/>
</dbReference>
<dbReference type="GO" id="GO:0052381">
    <property type="term" value="F:tRNA dimethylallyltransferase activity"/>
    <property type="evidence" value="ECO:0007669"/>
    <property type="project" value="UniProtKB-UniRule"/>
</dbReference>
<dbReference type="GO" id="GO:0006400">
    <property type="term" value="P:tRNA modification"/>
    <property type="evidence" value="ECO:0007669"/>
    <property type="project" value="TreeGrafter"/>
</dbReference>
<dbReference type="FunFam" id="1.10.20.140:FF:000001">
    <property type="entry name" value="tRNA dimethylallyltransferase"/>
    <property type="match status" value="1"/>
</dbReference>
<dbReference type="Gene3D" id="1.10.20.140">
    <property type="match status" value="1"/>
</dbReference>
<dbReference type="Gene3D" id="3.40.50.300">
    <property type="entry name" value="P-loop containing nucleotide triphosphate hydrolases"/>
    <property type="match status" value="1"/>
</dbReference>
<dbReference type="HAMAP" id="MF_00185">
    <property type="entry name" value="IPP_trans"/>
    <property type="match status" value="1"/>
</dbReference>
<dbReference type="InterPro" id="IPR039657">
    <property type="entry name" value="Dimethylallyltransferase"/>
</dbReference>
<dbReference type="InterPro" id="IPR018022">
    <property type="entry name" value="IPT"/>
</dbReference>
<dbReference type="InterPro" id="IPR027417">
    <property type="entry name" value="P-loop_NTPase"/>
</dbReference>
<dbReference type="NCBIfam" id="TIGR00174">
    <property type="entry name" value="miaA"/>
    <property type="match status" value="1"/>
</dbReference>
<dbReference type="PANTHER" id="PTHR11088">
    <property type="entry name" value="TRNA DIMETHYLALLYLTRANSFERASE"/>
    <property type="match status" value="1"/>
</dbReference>
<dbReference type="PANTHER" id="PTHR11088:SF60">
    <property type="entry name" value="TRNA DIMETHYLALLYLTRANSFERASE"/>
    <property type="match status" value="1"/>
</dbReference>
<dbReference type="Pfam" id="PF01715">
    <property type="entry name" value="IPPT"/>
    <property type="match status" value="1"/>
</dbReference>
<dbReference type="SUPFAM" id="SSF52540">
    <property type="entry name" value="P-loop containing nucleoside triphosphate hydrolases"/>
    <property type="match status" value="1"/>
</dbReference>
<reference key="1">
    <citation type="submission" date="2006-08" db="EMBL/GenBank/DDBJ databases">
        <title>Complete sequence of Shewanella frigidimarina NCIMB 400.</title>
        <authorList>
            <consortium name="US DOE Joint Genome Institute"/>
            <person name="Copeland A."/>
            <person name="Lucas S."/>
            <person name="Lapidus A."/>
            <person name="Barry K."/>
            <person name="Detter J.C."/>
            <person name="Glavina del Rio T."/>
            <person name="Hammon N."/>
            <person name="Israni S."/>
            <person name="Dalin E."/>
            <person name="Tice H."/>
            <person name="Pitluck S."/>
            <person name="Fredrickson J.K."/>
            <person name="Kolker E."/>
            <person name="McCuel L.A."/>
            <person name="DiChristina T."/>
            <person name="Nealson K.H."/>
            <person name="Newman D."/>
            <person name="Tiedje J.M."/>
            <person name="Zhou J."/>
            <person name="Romine M.F."/>
            <person name="Culley D.E."/>
            <person name="Serres M."/>
            <person name="Chertkov O."/>
            <person name="Brettin T."/>
            <person name="Bruce D."/>
            <person name="Han C."/>
            <person name="Tapia R."/>
            <person name="Gilna P."/>
            <person name="Schmutz J."/>
            <person name="Larimer F."/>
            <person name="Land M."/>
            <person name="Hauser L."/>
            <person name="Kyrpides N."/>
            <person name="Mikhailova N."/>
            <person name="Richardson P."/>
        </authorList>
    </citation>
    <scope>NUCLEOTIDE SEQUENCE [LARGE SCALE GENOMIC DNA]</scope>
    <source>
        <strain>NCIMB 400</strain>
    </source>
</reference>